<reference key="1">
    <citation type="journal article" date="2010" name="J. Mol. Evol.">
        <title>Evolution of conus peptide genes: duplication and positive selection in the A-Superfamily.</title>
        <authorList>
            <person name="Puillandre N."/>
            <person name="Watkins M."/>
            <person name="Olivera B.M."/>
        </authorList>
    </citation>
    <scope>NUCLEOTIDE SEQUENCE [MRNA]</scope>
    <scope>TISSUE SPECIFICITY</scope>
    <source>
        <tissue>Venom duct</tissue>
    </source>
</reference>
<reference key="2">
    <citation type="journal article" date="2013" name="Anal. Bioanal. Chem.">
        <title>Identification and functional characterization of a novel alpha-conotoxin (EIIA) from Conus ermineus.</title>
        <authorList>
            <person name="Quinton L."/>
            <person name="Servent D."/>
            <person name="Girard E."/>
            <person name="Molgo J."/>
            <person name="Le Caer J.P."/>
            <person name="Malosse C."/>
            <person name="Haidar E.A."/>
            <person name="Lecoq A."/>
            <person name="Gilles N."/>
            <person name="Chamot-Rooke J."/>
        </authorList>
    </citation>
    <scope>PROTEIN SEQUENCE OF 43-58</scope>
    <scope>IDENTIFICATION BY MASS SPECTROMETRY</scope>
    <scope>SYNTHESIS OF 43-58</scope>
    <scope>FUNCTION</scope>
    <scope>SUBCELLULAR LOCATION</scope>
    <scope>PYROGLUTAMATE FORMATION AT GLN-43</scope>
    <scope>HYDROXYLATION AT PRO-45</scope>
    <scope>AMIDATION AT CYS-58</scope>
    <source>
        <tissue>Venom</tissue>
    </source>
</reference>
<reference key="3">
    <citation type="journal article" date="2017" name="Toxicon">
        <title>Discovery and characterization of EIIB, a new alpha-conotoxin from Conus ermineus venom by nAChRs affinity capture monitored by MALDI-TOF/TOF mass spectrometry.</title>
        <authorList>
            <person name="Echterbille J."/>
            <person name="Gilles N."/>
            <person name="Araoz R."/>
            <person name="Mourier G."/>
            <person name="Amar M."/>
            <person name="Servent D."/>
            <person name="De Pauw E."/>
            <person name="Quinton L."/>
        </authorList>
    </citation>
    <scope>PROTEIN SEQUENCE OF 43-58</scope>
    <scope>IDENTIFICATION BY MASS SPECTROMETRY</scope>
    <scope>SUBCELLULAR LOCATION</scope>
    <source>
        <tissue>Venom</tissue>
    </source>
</reference>
<organism>
    <name type="scientific">Conus ermineus</name>
    <name type="common">Agate cone</name>
    <name type="synonym">Chelyconus ermineus</name>
    <dbReference type="NCBI Taxonomy" id="55423"/>
    <lineage>
        <taxon>Eukaryota</taxon>
        <taxon>Metazoa</taxon>
        <taxon>Spiralia</taxon>
        <taxon>Lophotrochozoa</taxon>
        <taxon>Mollusca</taxon>
        <taxon>Gastropoda</taxon>
        <taxon>Caenogastropoda</taxon>
        <taxon>Neogastropoda</taxon>
        <taxon>Conoidea</taxon>
        <taxon>Conidae</taxon>
        <taxon>Conus</taxon>
        <taxon>Chelyconus</taxon>
    </lineage>
</organism>
<feature type="signal peptide" evidence="2">
    <location>
        <begin position="1"/>
        <end position="16"/>
    </location>
</feature>
<feature type="propeptide" id="PRO_0000422880" evidence="7 8">
    <location>
        <begin position="17"/>
        <end position="40"/>
    </location>
</feature>
<feature type="peptide" id="PRO_0000422881" description="Alpha-conotoxin EIIA" evidence="4 5">
    <location>
        <begin position="43"/>
        <end position="58"/>
    </location>
</feature>
<feature type="modified residue" description="Pyrrolidone carboxylic acid" evidence="4">
    <location>
        <position position="43"/>
    </location>
</feature>
<feature type="modified residue" description="Hydroxyproline" evidence="4">
    <location>
        <position position="45"/>
    </location>
</feature>
<feature type="modified residue" description="Cysteine amide" evidence="4">
    <location>
        <position position="58"/>
    </location>
</feature>
<feature type="disulfide bond" evidence="1">
    <location>
        <begin position="47"/>
        <end position="53"/>
    </location>
</feature>
<feature type="disulfide bond" evidence="1">
    <location>
        <begin position="48"/>
        <end position="58"/>
    </location>
</feature>
<feature type="sequence variant">
    <original>A</original>
    <variation>K</variation>
    <location>
        <position position="29"/>
    </location>
</feature>
<evidence type="ECO:0000250" key="1">
    <source>
        <dbReference type="UniProtKB" id="P69657"/>
    </source>
</evidence>
<evidence type="ECO:0000255" key="2"/>
<evidence type="ECO:0000269" key="3">
    <source>
    </source>
</evidence>
<evidence type="ECO:0000269" key="4">
    <source>
    </source>
</evidence>
<evidence type="ECO:0000269" key="5">
    <source>
    </source>
</evidence>
<evidence type="ECO:0000305" key="6"/>
<evidence type="ECO:0000305" key="7">
    <source>
    </source>
</evidence>
<evidence type="ECO:0000305" key="8">
    <source>
    </source>
</evidence>
<keyword id="KW-0008">Acetylcholine receptor inhibiting toxin</keyword>
<keyword id="KW-0027">Amidation</keyword>
<keyword id="KW-0165">Cleavage on pair of basic residues</keyword>
<keyword id="KW-0903">Direct protein sequencing</keyword>
<keyword id="KW-1015">Disulfide bond</keyword>
<keyword id="KW-0379">Hydroxylation</keyword>
<keyword id="KW-0528">Neurotoxin</keyword>
<keyword id="KW-0629">Postsynaptic neurotoxin</keyword>
<keyword id="KW-0873">Pyrrolidone carboxylic acid</keyword>
<keyword id="KW-0964">Secreted</keyword>
<keyword id="KW-0732">Signal</keyword>
<keyword id="KW-0800">Toxin</keyword>
<protein>
    <recommendedName>
        <fullName>Alpha-conotoxin EIIA</fullName>
    </recommendedName>
</protein>
<name>CA12A_CONER</name>
<sequence>MFIVFLLVVLATTVGSFTLDRVLEGRNAAAIDNALDQRDPKRQTPGCCWNPACVKNRCGRR</sequence>
<comment type="function">
    <text evidence="4">Alpha-conotoxins bind to the nicotinic acetylcholine receptors (nAChR) and inhibit them. This peptide potently blocks muscular nicotinic acetylcholine receptor (CHRNA1-CHRNB1-CHRNG-CHRND), and has no effect on neuronal receptors. It is able to totally displace [125I]-Bgtx from the Torpedo receptor with a complete inhibition in the high micromolar range. It produces a biphasic inhibition curve which fits nicely with a two-site model (Ki of 0.46 and 105 nM).</text>
</comment>
<comment type="subcellular location">
    <subcellularLocation>
        <location evidence="4 5">Secreted</location>
    </subcellularLocation>
</comment>
<comment type="tissue specificity">
    <text evidence="3">Expressed by the venom duct.</text>
</comment>
<comment type="domain">
    <text evidence="6">The cysteine framework is I (CC-C-C). Alpha4/4 pattern.</text>
</comment>
<comment type="miscellaneous">
    <text evidence="7">Negative results: has no effect on chimeric alpha-7 (CHRNA7), alpha-3-beta-2 (CHRNA3-CHRNB2) and alpha-4-beta-2 (CHRNA4-CHRNB2).</text>
</comment>
<comment type="similarity">
    <text evidence="6">Belongs to the conotoxin A superfamily.</text>
</comment>
<accession>D4HRK4</accession>
<accession>D4HRK5</accession>
<proteinExistence type="evidence at protein level"/>
<dbReference type="EMBL" id="FJ937346">
    <property type="protein sequence ID" value="ACZ37197.1"/>
    <property type="molecule type" value="Genomic_DNA"/>
</dbReference>
<dbReference type="EMBL" id="FJ937347">
    <property type="protein sequence ID" value="ACZ37198.1"/>
    <property type="molecule type" value="Genomic_DNA"/>
</dbReference>
<dbReference type="GO" id="GO:0005576">
    <property type="term" value="C:extracellular region"/>
    <property type="evidence" value="ECO:0007669"/>
    <property type="project" value="UniProtKB-SubCell"/>
</dbReference>
<dbReference type="GO" id="GO:0035792">
    <property type="term" value="C:host cell postsynaptic membrane"/>
    <property type="evidence" value="ECO:0007669"/>
    <property type="project" value="UniProtKB-KW"/>
</dbReference>
<dbReference type="GO" id="GO:0030550">
    <property type="term" value="F:acetylcholine receptor inhibitor activity"/>
    <property type="evidence" value="ECO:0007669"/>
    <property type="project" value="UniProtKB-KW"/>
</dbReference>
<dbReference type="GO" id="GO:0090729">
    <property type="term" value="F:toxin activity"/>
    <property type="evidence" value="ECO:0007669"/>
    <property type="project" value="UniProtKB-KW"/>
</dbReference>
<dbReference type="InterPro" id="IPR009958">
    <property type="entry name" value="Conotoxin_a-typ"/>
</dbReference>
<dbReference type="Pfam" id="PF07365">
    <property type="entry name" value="Toxin_8"/>
    <property type="match status" value="1"/>
</dbReference>